<protein>
    <recommendedName>
        <fullName evidence="1">ATPase ASNA1 homolog</fullName>
        <ecNumber evidence="1">3.6.-.-</ecNumber>
    </recommendedName>
    <alternativeName>
        <fullName evidence="1">Arsenical pump-driving ATPase homolog</fullName>
    </alternativeName>
    <alternativeName>
        <fullName evidence="1">Arsenite-stimulated ATPase</fullName>
    </alternativeName>
</protein>
<proteinExistence type="inferred from homology"/>
<gene>
    <name type="ORF">GD10240</name>
</gene>
<comment type="function">
    <text evidence="1">ATPase required for the post-translational delivery of tail-anchored (TA) proteins to the endoplasmic reticulum. Recognizes and selectively binds the transmembrane domain of TA proteins in the cytosol. This complex then targets to the endoplasmic reticulum by membrane-bound receptors, where the tail-anchored protein is released for insertion. This process is regulated by ATP binding and hydrolysis. ATP binding drives the homodimer towards the closed dimer state, facilitating recognition of newly synthesized TA membrane proteins. ATP hydrolysis is required for insertion. Subsequently, the homodimer reverts towards the open dimer state, lowering its affinity for the membrane-bound receptor, and returning it to the cytosol to initiate a new round of targeting.</text>
</comment>
<comment type="subunit">
    <text evidence="1">Homodimer.</text>
</comment>
<comment type="subcellular location">
    <subcellularLocation>
        <location evidence="1">Cytoplasm</location>
    </subcellularLocation>
    <subcellularLocation>
        <location evidence="1">Endoplasmic reticulum</location>
    </subcellularLocation>
</comment>
<comment type="similarity">
    <text evidence="1">Belongs to the arsA ATPase family.</text>
</comment>
<sequence length="336" mass="37610">MADNLEPLEPSLQNLVEQDSLKWIFVGGKGGVGKTTCSSSLAVQLSKVRESVLIISTDPAHNISDAFDQKFTKVPTKVNGFDNLFAMEIDPNAGLNELPEEYFDGENEALRVSKGVMQEMINALPGIDEAMSYAEVMKLVKGMNFSVVVFDTAPTGHTLRLIAFPQVVEKGLGKLLRLKMKVAPLLSQFVSMLGMADVNADTLSQKLDDMLRVITQVNEQFKNPDQTTFVCVCIAEFFSLYETERLVQELTKCGIDVHNIIVNQLLFLQKSHDSCSMCASRFKIQEKYLDQIADLYEDFHVTKLPLLEKEVRGPESIRSFSENLMKPYDPKAEPKE</sequence>
<keyword id="KW-0067">ATP-binding</keyword>
<keyword id="KW-0963">Cytoplasm</keyword>
<keyword id="KW-0256">Endoplasmic reticulum</keyword>
<keyword id="KW-0378">Hydrolase</keyword>
<keyword id="KW-0479">Metal-binding</keyword>
<keyword id="KW-0547">Nucleotide-binding</keyword>
<keyword id="KW-1185">Reference proteome</keyword>
<keyword id="KW-0813">Transport</keyword>
<keyword id="KW-0862">Zinc</keyword>
<feature type="chain" id="PRO_0000388156" description="ATPase ASNA1 homolog">
    <location>
        <begin position="1"/>
        <end position="336"/>
    </location>
</feature>
<feature type="active site" evidence="1">
    <location>
        <position position="58"/>
    </location>
</feature>
<feature type="binding site" evidence="1">
    <location>
        <begin position="29"/>
        <end position="36"/>
    </location>
    <ligand>
        <name>ATP</name>
        <dbReference type="ChEBI" id="CHEBI:30616"/>
    </ligand>
</feature>
<feature type="binding site" evidence="1">
    <location>
        <position position="236"/>
    </location>
    <ligand>
        <name>ATP</name>
        <dbReference type="ChEBI" id="CHEBI:30616"/>
    </ligand>
</feature>
<feature type="binding site" evidence="1">
    <location>
        <position position="263"/>
    </location>
    <ligand>
        <name>ATP</name>
        <dbReference type="ChEBI" id="CHEBI:30616"/>
    </ligand>
</feature>
<feature type="binding site" evidence="1">
    <location>
        <position position="275"/>
    </location>
    <ligand>
        <name>Zn(2+)</name>
        <dbReference type="ChEBI" id="CHEBI:29105"/>
        <note>ligand shared between dimeric partners</note>
    </ligand>
</feature>
<feature type="binding site" evidence="1">
    <location>
        <position position="278"/>
    </location>
    <ligand>
        <name>Zn(2+)</name>
        <dbReference type="ChEBI" id="CHEBI:29105"/>
        <note>ligand shared between dimeric partners</note>
    </ligand>
</feature>
<name>ASNA_DROSI</name>
<evidence type="ECO:0000255" key="1">
    <source>
        <dbReference type="HAMAP-Rule" id="MF_03112"/>
    </source>
</evidence>
<organism>
    <name type="scientific">Drosophila simulans</name>
    <name type="common">Fruit fly</name>
    <dbReference type="NCBI Taxonomy" id="7240"/>
    <lineage>
        <taxon>Eukaryota</taxon>
        <taxon>Metazoa</taxon>
        <taxon>Ecdysozoa</taxon>
        <taxon>Arthropoda</taxon>
        <taxon>Hexapoda</taxon>
        <taxon>Insecta</taxon>
        <taxon>Pterygota</taxon>
        <taxon>Neoptera</taxon>
        <taxon>Endopterygota</taxon>
        <taxon>Diptera</taxon>
        <taxon>Brachycera</taxon>
        <taxon>Muscomorpha</taxon>
        <taxon>Ephydroidea</taxon>
        <taxon>Drosophilidae</taxon>
        <taxon>Drosophila</taxon>
        <taxon>Sophophora</taxon>
    </lineage>
</organism>
<dbReference type="EC" id="3.6.-.-" evidence="1"/>
<dbReference type="EMBL" id="CM000362">
    <property type="protein sequence ID" value="EDX06033.1"/>
    <property type="molecule type" value="Genomic_DNA"/>
</dbReference>
<dbReference type="SMR" id="B4QEC4"/>
<dbReference type="STRING" id="7240.B4QEC4"/>
<dbReference type="EnsemblMetazoa" id="FBtr0210150">
    <property type="protein sequence ID" value="FBpp0208642"/>
    <property type="gene ID" value="FBgn0182015"/>
</dbReference>
<dbReference type="EnsemblMetazoa" id="XM_002080412.3">
    <property type="protein sequence ID" value="XP_002080448.1"/>
    <property type="gene ID" value="LOC6733391"/>
</dbReference>
<dbReference type="GeneID" id="6733391"/>
<dbReference type="HOGENOM" id="CLU_040761_0_0_1"/>
<dbReference type="OMA" id="MDAPYEF"/>
<dbReference type="OrthoDB" id="1770at2759"/>
<dbReference type="PhylomeDB" id="B4QEC4"/>
<dbReference type="Proteomes" id="UP000000304">
    <property type="component" value="Chromosome 2R"/>
</dbReference>
<dbReference type="Bgee" id="FBgn0182015">
    <property type="expression patterns" value="Expressed in male reproductive system and 3 other cell types or tissues"/>
</dbReference>
<dbReference type="GO" id="GO:0043529">
    <property type="term" value="C:GET complex"/>
    <property type="evidence" value="ECO:0007669"/>
    <property type="project" value="TreeGrafter"/>
</dbReference>
<dbReference type="GO" id="GO:0005524">
    <property type="term" value="F:ATP binding"/>
    <property type="evidence" value="ECO:0007669"/>
    <property type="project" value="UniProtKB-UniRule"/>
</dbReference>
<dbReference type="GO" id="GO:0016887">
    <property type="term" value="F:ATP hydrolysis activity"/>
    <property type="evidence" value="ECO:0007669"/>
    <property type="project" value="InterPro"/>
</dbReference>
<dbReference type="GO" id="GO:0046872">
    <property type="term" value="F:metal ion binding"/>
    <property type="evidence" value="ECO:0007669"/>
    <property type="project" value="UniProtKB-KW"/>
</dbReference>
<dbReference type="GO" id="GO:0071816">
    <property type="term" value="P:tail-anchored membrane protein insertion into ER membrane"/>
    <property type="evidence" value="ECO:0007669"/>
    <property type="project" value="TreeGrafter"/>
</dbReference>
<dbReference type="CDD" id="cd02035">
    <property type="entry name" value="ArsA"/>
    <property type="match status" value="1"/>
</dbReference>
<dbReference type="FunFam" id="3.40.50.300:FF:000235">
    <property type="entry name" value="ATPase ASNA1"/>
    <property type="match status" value="1"/>
</dbReference>
<dbReference type="Gene3D" id="3.40.50.300">
    <property type="entry name" value="P-loop containing nucleotide triphosphate hydrolases"/>
    <property type="match status" value="1"/>
</dbReference>
<dbReference type="HAMAP" id="MF_03112">
    <property type="entry name" value="Asna1_Get3"/>
    <property type="match status" value="1"/>
</dbReference>
<dbReference type="InterPro" id="IPR025723">
    <property type="entry name" value="Anion-transp_ATPase-like_dom"/>
</dbReference>
<dbReference type="InterPro" id="IPR016300">
    <property type="entry name" value="ATPase_ArsA/GET3"/>
</dbReference>
<dbReference type="InterPro" id="IPR027542">
    <property type="entry name" value="ATPase_ArsA/GET3_euk"/>
</dbReference>
<dbReference type="InterPro" id="IPR027417">
    <property type="entry name" value="P-loop_NTPase"/>
</dbReference>
<dbReference type="NCBIfam" id="TIGR00345">
    <property type="entry name" value="GET3_arsA_TRC40"/>
    <property type="match status" value="1"/>
</dbReference>
<dbReference type="PANTHER" id="PTHR10803">
    <property type="entry name" value="ARSENICAL PUMP-DRIVING ATPASE ARSENITE-TRANSLOCATING ATPASE"/>
    <property type="match status" value="1"/>
</dbReference>
<dbReference type="PANTHER" id="PTHR10803:SF3">
    <property type="entry name" value="ATPASE GET3"/>
    <property type="match status" value="1"/>
</dbReference>
<dbReference type="Pfam" id="PF02374">
    <property type="entry name" value="ArsA_ATPase"/>
    <property type="match status" value="1"/>
</dbReference>
<dbReference type="SUPFAM" id="SSF52540">
    <property type="entry name" value="P-loop containing nucleoside triphosphate hydrolases"/>
    <property type="match status" value="1"/>
</dbReference>
<reference key="1">
    <citation type="journal article" date="2007" name="Nature">
        <title>Evolution of genes and genomes on the Drosophila phylogeny.</title>
        <authorList>
            <consortium name="Drosophila 12 genomes consortium"/>
        </authorList>
    </citation>
    <scope>NUCLEOTIDE SEQUENCE [LARGE SCALE GENOMIC DNA]</scope>
</reference>
<accession>B4QEC4</accession>